<sequence>MTIASSNGSNRAQSPLITDLAEAINTRPDRNTHNGREPELHQPSEEDMESMMGAVRSILVGVGEDPEREGLLKTPKRVAEAMRFLTSGYNQSLEELLNGAVFDEGHNEMVLVRDINFFSLCEHHMLPFMGRAHVAYIPNQKVVGLSKLARIVEMYSRRLQVQERLTRQIAEAVQTILEPQGVAVVMEASHMCMVMRGVQKPGSWTVTSAMLGVFQEEQKTREEFFNLIRHQPAFF</sequence>
<keyword id="KW-0342">GTP-binding</keyword>
<keyword id="KW-0378">Hydrolase</keyword>
<keyword id="KW-0547">Nucleotide-binding</keyword>
<keyword id="KW-0554">One-carbon metabolism</keyword>
<keyword id="KW-1185">Reference proteome</keyword>
<feature type="chain" id="PRO_0000119379" description="GTP cyclohydrolase 1 1">
    <location>
        <begin position="1"/>
        <end position="235"/>
    </location>
</feature>
<feature type="region of interest" description="Disordered" evidence="2">
    <location>
        <begin position="26"/>
        <end position="47"/>
    </location>
</feature>
<feature type="compositionally biased region" description="Basic and acidic residues" evidence="2">
    <location>
        <begin position="27"/>
        <end position="44"/>
    </location>
</feature>
<evidence type="ECO:0000250" key="1"/>
<evidence type="ECO:0000256" key="2">
    <source>
        <dbReference type="SAM" id="MobiDB-lite"/>
    </source>
</evidence>
<evidence type="ECO:0000305" key="3"/>
<protein>
    <recommendedName>
        <fullName>GTP cyclohydrolase 1 1</fullName>
        <ecNumber>3.5.4.16</ecNumber>
    </recommendedName>
    <alternativeName>
        <fullName>GTP cyclohydrolase I 1</fullName>
        <shortName>GTP-CH-I 1</shortName>
    </alternativeName>
</protein>
<dbReference type="EC" id="3.5.4.16"/>
<dbReference type="EMBL" id="BA000019">
    <property type="protein sequence ID" value="BAB76986.1"/>
    <property type="molecule type" value="Genomic_DNA"/>
</dbReference>
<dbReference type="PIR" id="AG2466">
    <property type="entry name" value="AG2466"/>
</dbReference>
<dbReference type="SMR" id="Q8YLL1"/>
<dbReference type="STRING" id="103690.gene:10497347"/>
<dbReference type="KEGG" id="ana:alr5287"/>
<dbReference type="eggNOG" id="COG0302">
    <property type="taxonomic scope" value="Bacteria"/>
</dbReference>
<dbReference type="OrthoDB" id="9801207at2"/>
<dbReference type="UniPathway" id="UPA00848">
    <property type="reaction ID" value="UER00151"/>
</dbReference>
<dbReference type="Proteomes" id="UP000002483">
    <property type="component" value="Chromosome"/>
</dbReference>
<dbReference type="GO" id="GO:0005737">
    <property type="term" value="C:cytoplasm"/>
    <property type="evidence" value="ECO:0007669"/>
    <property type="project" value="TreeGrafter"/>
</dbReference>
<dbReference type="GO" id="GO:0005525">
    <property type="term" value="F:GTP binding"/>
    <property type="evidence" value="ECO:0007669"/>
    <property type="project" value="UniProtKB-KW"/>
</dbReference>
<dbReference type="GO" id="GO:0003934">
    <property type="term" value="F:GTP cyclohydrolase I activity"/>
    <property type="evidence" value="ECO:0007669"/>
    <property type="project" value="UniProtKB-UniRule"/>
</dbReference>
<dbReference type="GO" id="GO:0008270">
    <property type="term" value="F:zinc ion binding"/>
    <property type="evidence" value="ECO:0007669"/>
    <property type="project" value="UniProtKB-UniRule"/>
</dbReference>
<dbReference type="GO" id="GO:0006730">
    <property type="term" value="P:one-carbon metabolic process"/>
    <property type="evidence" value="ECO:0007669"/>
    <property type="project" value="UniProtKB-UniRule"/>
</dbReference>
<dbReference type="GO" id="GO:0006729">
    <property type="term" value="P:tetrahydrobiopterin biosynthetic process"/>
    <property type="evidence" value="ECO:0007669"/>
    <property type="project" value="TreeGrafter"/>
</dbReference>
<dbReference type="GO" id="GO:0046654">
    <property type="term" value="P:tetrahydrofolate biosynthetic process"/>
    <property type="evidence" value="ECO:0007669"/>
    <property type="project" value="UniProtKB-UniRule"/>
</dbReference>
<dbReference type="CDD" id="cd00642">
    <property type="entry name" value="GTP_cyclohydro1"/>
    <property type="match status" value="1"/>
</dbReference>
<dbReference type="FunFam" id="1.10.286.10:FF:000003">
    <property type="entry name" value="GTP cyclohydrolase 1"/>
    <property type="match status" value="1"/>
</dbReference>
<dbReference type="FunFam" id="3.30.1130.10:FF:000012">
    <property type="entry name" value="GTP cyclohydrolase 1"/>
    <property type="match status" value="1"/>
</dbReference>
<dbReference type="Gene3D" id="1.10.286.10">
    <property type="match status" value="1"/>
</dbReference>
<dbReference type="Gene3D" id="3.30.1130.10">
    <property type="match status" value="1"/>
</dbReference>
<dbReference type="HAMAP" id="MF_00223">
    <property type="entry name" value="FolE"/>
    <property type="match status" value="1"/>
</dbReference>
<dbReference type="InterPro" id="IPR043133">
    <property type="entry name" value="GTP-CH-I_C/QueF"/>
</dbReference>
<dbReference type="InterPro" id="IPR043134">
    <property type="entry name" value="GTP-CH-I_N"/>
</dbReference>
<dbReference type="InterPro" id="IPR001474">
    <property type="entry name" value="GTP_CycHdrlase_I"/>
</dbReference>
<dbReference type="InterPro" id="IPR018234">
    <property type="entry name" value="GTP_CycHdrlase_I_CS"/>
</dbReference>
<dbReference type="InterPro" id="IPR020602">
    <property type="entry name" value="GTP_CycHdrlase_I_dom"/>
</dbReference>
<dbReference type="NCBIfam" id="TIGR00063">
    <property type="entry name" value="folE"/>
    <property type="match status" value="1"/>
</dbReference>
<dbReference type="NCBIfam" id="NF006825">
    <property type="entry name" value="PRK09347.1-2"/>
    <property type="match status" value="1"/>
</dbReference>
<dbReference type="NCBIfam" id="NF006826">
    <property type="entry name" value="PRK09347.1-3"/>
    <property type="match status" value="1"/>
</dbReference>
<dbReference type="PANTHER" id="PTHR11109:SF7">
    <property type="entry name" value="GTP CYCLOHYDROLASE 1"/>
    <property type="match status" value="1"/>
</dbReference>
<dbReference type="PANTHER" id="PTHR11109">
    <property type="entry name" value="GTP CYCLOHYDROLASE I"/>
    <property type="match status" value="1"/>
</dbReference>
<dbReference type="Pfam" id="PF01227">
    <property type="entry name" value="GTP_cyclohydroI"/>
    <property type="match status" value="1"/>
</dbReference>
<dbReference type="SUPFAM" id="SSF55620">
    <property type="entry name" value="Tetrahydrobiopterin biosynthesis enzymes-like"/>
    <property type="match status" value="1"/>
</dbReference>
<dbReference type="PROSITE" id="PS00859">
    <property type="entry name" value="GTP_CYCLOHYDROL_1_1"/>
    <property type="match status" value="1"/>
</dbReference>
<dbReference type="PROSITE" id="PS00860">
    <property type="entry name" value="GTP_CYCLOHYDROL_1_2"/>
    <property type="match status" value="1"/>
</dbReference>
<reference key="1">
    <citation type="journal article" date="2001" name="DNA Res.">
        <title>Complete genomic sequence of the filamentous nitrogen-fixing cyanobacterium Anabaena sp. strain PCC 7120.</title>
        <authorList>
            <person name="Kaneko T."/>
            <person name="Nakamura Y."/>
            <person name="Wolk C.P."/>
            <person name="Kuritz T."/>
            <person name="Sasamoto S."/>
            <person name="Watanabe A."/>
            <person name="Iriguchi M."/>
            <person name="Ishikawa A."/>
            <person name="Kawashima K."/>
            <person name="Kimura T."/>
            <person name="Kishida Y."/>
            <person name="Kohara M."/>
            <person name="Matsumoto M."/>
            <person name="Matsuno A."/>
            <person name="Muraki A."/>
            <person name="Nakazaki N."/>
            <person name="Shimpo S."/>
            <person name="Sugimoto M."/>
            <person name="Takazawa M."/>
            <person name="Yamada M."/>
            <person name="Yasuda M."/>
            <person name="Tabata S."/>
        </authorList>
    </citation>
    <scope>NUCLEOTIDE SEQUENCE [LARGE SCALE GENOMIC DNA]</scope>
    <source>
        <strain>PCC 7120 / SAG 25.82 / UTEX 2576</strain>
    </source>
</reference>
<gene>
    <name type="primary">folE1</name>
    <name type="ordered locus">alr5287</name>
</gene>
<name>GCH11_NOSS1</name>
<comment type="catalytic activity">
    <reaction>
        <text>GTP + H2O = 7,8-dihydroneopterin 3'-triphosphate + formate + H(+)</text>
        <dbReference type="Rhea" id="RHEA:17473"/>
        <dbReference type="ChEBI" id="CHEBI:15377"/>
        <dbReference type="ChEBI" id="CHEBI:15378"/>
        <dbReference type="ChEBI" id="CHEBI:15740"/>
        <dbReference type="ChEBI" id="CHEBI:37565"/>
        <dbReference type="ChEBI" id="CHEBI:58462"/>
        <dbReference type="EC" id="3.5.4.16"/>
    </reaction>
</comment>
<comment type="pathway">
    <text>Cofactor biosynthesis; 7,8-dihydroneopterin triphosphate biosynthesis; 7,8-dihydroneopterin triphosphate from GTP: step 1/1.</text>
</comment>
<comment type="subunit">
    <text evidence="1">Homomer.</text>
</comment>
<comment type="similarity">
    <text evidence="3">Belongs to the GTP cyclohydrolase I family.</text>
</comment>
<proteinExistence type="inferred from homology"/>
<organism>
    <name type="scientific">Nostoc sp. (strain PCC 7120 / SAG 25.82 / UTEX 2576)</name>
    <dbReference type="NCBI Taxonomy" id="103690"/>
    <lineage>
        <taxon>Bacteria</taxon>
        <taxon>Bacillati</taxon>
        <taxon>Cyanobacteriota</taxon>
        <taxon>Cyanophyceae</taxon>
        <taxon>Nostocales</taxon>
        <taxon>Nostocaceae</taxon>
        <taxon>Nostoc</taxon>
    </lineage>
</organism>
<accession>Q8YLL1</accession>